<name>NCAP_MEASS</name>
<proteinExistence type="inferred from homology"/>
<evidence type="ECO:0000250" key="1"/>
<evidence type="ECO:0000250" key="2">
    <source>
        <dbReference type="UniProtKB" id="O57286"/>
    </source>
</evidence>
<evidence type="ECO:0000250" key="3">
    <source>
        <dbReference type="UniProtKB" id="P04851"/>
    </source>
</evidence>
<evidence type="ECO:0000250" key="4">
    <source>
        <dbReference type="UniProtKB" id="P06159"/>
    </source>
</evidence>
<evidence type="ECO:0000250" key="5">
    <source>
        <dbReference type="UniProtKB" id="P0DXN6"/>
    </source>
</evidence>
<evidence type="ECO:0000250" key="6">
    <source>
        <dbReference type="UniProtKB" id="P10050"/>
    </source>
</evidence>
<evidence type="ECO:0000250" key="7">
    <source>
        <dbReference type="UniProtKB" id="Q07097"/>
    </source>
</evidence>
<evidence type="ECO:0000250" key="8">
    <source>
        <dbReference type="UniProtKB" id="Q77M43"/>
    </source>
</evidence>
<evidence type="ECO:0000250" key="9">
    <source>
        <dbReference type="UniProtKB" id="Q89933"/>
    </source>
</evidence>
<evidence type="ECO:0000250" key="10">
    <source>
        <dbReference type="UniProtKB" id="Q9WMB5"/>
    </source>
</evidence>
<evidence type="ECO:0000256" key="11">
    <source>
        <dbReference type="SAM" id="MobiDB-lite"/>
    </source>
</evidence>
<evidence type="ECO:0000305" key="12"/>
<gene>
    <name type="primary">N</name>
    <name type="synonym">NP</name>
</gene>
<reference key="1">
    <citation type="journal article" date="1994" name="Virus Res.">
        <title>Comparison of sequences of the H, F, and N coding genes of measles virus vaccine strains.</title>
        <authorList>
            <person name="Rota J.S."/>
            <person name="Wang Z.D."/>
            <person name="Rota P.A."/>
            <person name="Bellini W.J."/>
        </authorList>
    </citation>
    <scope>NUCLEOTIDE SEQUENCE [GENOMIC RNA]</scope>
</reference>
<reference key="2">
    <citation type="submission" date="2008-01" db="EMBL/GenBank/DDBJ databases">
        <authorList>
            <person name="Wang H."/>
            <person name="Yu J."/>
            <person name="Zhang J."/>
            <person name="Chen S."/>
            <person name="Zhang Q."/>
            <person name="Shen X."/>
            <person name="Li Q."/>
        </authorList>
    </citation>
    <scope>NUCLEOTIDE SEQUENCE [GENOMIC RNA]</scope>
</reference>
<reference key="3">
    <citation type="journal article" date="2009" name="J. Med. Virol.">
        <title>Genetic characterization of Chinese measles vaccines by analysis of complete genomic sequences.</title>
        <authorList>
            <person name="Zhang Y."/>
            <person name="Zhou J."/>
            <person name="Bellini W.J."/>
            <person name="Xu W."/>
            <person name="Rota P.A."/>
        </authorList>
    </citation>
    <scope>NUCLEOTIDE SEQUENCE [GENOMIC RNA]</scope>
</reference>
<sequence length="525" mass="58075">MATLLRSLALFKRNKDKPPITSGSGGAIRGIKHIIIVPIPGDSSITTRSRLLDRLVRLIGNPDVSGPKLTGALIGILSLFVESPGQLIQRITDDPDVSIRLLEVVQSDQSQSGLTFASRGTNMEDEADQYFSHDDPISSDQSRFGWFENKEISDIEVQDPEGFNMILGTILAQIWVLLAKAVTAPDTAADSELRRWIKYTQQRRVVGEFRLERKWLDVVRNRIAEDLSLRRFMVALILDIKRTPGNKPRIAEMICDIDTYIVEAGLASFILTIKFGIETMYPALGLHEFAGELSTLESLMNLYQQMGETAPYMVILENSIQNKFSAGSYPLLWSYAMGVGVELENSMGGLNFGRSYFDPAYFRLGQEMVRRSAGKVSSTLASELGITAEDARLVSEIAMHTTEDKISRAVGPRQAQVSFLHGDQSENELPRLGGKEDRRVKQSRGEARESYRETGPSRASDARAAHLPTGTPPDTDTAPESSQDPQDSRRSADALLRLQAMAGISEEQGSDTDTPTVHNDRNLLD</sequence>
<organism>
    <name type="scientific">Measles virus (strain Shanghai-191 vaccine)</name>
    <name type="common">MeV</name>
    <dbReference type="NCBI Taxonomy" id="673322"/>
    <lineage>
        <taxon>Viruses</taxon>
        <taxon>Riboviria</taxon>
        <taxon>Orthornavirae</taxon>
        <taxon>Negarnaviricota</taxon>
        <taxon>Haploviricotina</taxon>
        <taxon>Monjiviricetes</taxon>
        <taxon>Mononegavirales</taxon>
        <taxon>Paramyxoviridae</taxon>
        <taxon>Orthoparamyxovirinae</taxon>
        <taxon>Morbillivirus</taxon>
        <taxon>Morbillivirus hominis</taxon>
        <taxon>Measles morbillivirus</taxon>
    </lineage>
</organism>
<feature type="chain" id="PRO_0000387980" description="Nucleoprotein">
    <location>
        <begin position="1"/>
        <end position="525"/>
    </location>
</feature>
<feature type="region of interest" description="Ncore" evidence="4">
    <location>
        <begin position="1"/>
        <end position="403"/>
    </location>
</feature>
<feature type="region of interest" description="Ncore" evidence="1">
    <location>
        <begin position="1"/>
        <end position="400"/>
    </location>
</feature>
<feature type="region of interest" description="RNA packaging and organization of the helical nucleocapsid" evidence="9">
    <location>
        <begin position="1"/>
        <end position="375"/>
    </location>
</feature>
<feature type="region of interest" description="Homomultimerization" evidence="6">
    <location>
        <begin position="1"/>
        <end position="36"/>
    </location>
</feature>
<feature type="region of interest" description="Homomultimerization" evidence="6">
    <location>
        <begin position="373"/>
        <end position="391"/>
    </location>
</feature>
<feature type="region of interest" description="Ntail" evidence="4">
    <location>
        <begin position="404"/>
        <end position="525"/>
    </location>
</feature>
<feature type="region of interest" description="Disordered" evidence="11">
    <location>
        <begin position="418"/>
        <end position="525"/>
    </location>
</feature>
<feature type="region of interest" description="Interaction with the phosphoprotein" evidence="8">
    <location>
        <begin position="477"/>
        <end position="505"/>
    </location>
</feature>
<feature type="short sequence motif" description="Nuclear localization signal" evidence="3">
    <location>
        <begin position="70"/>
        <end position="77"/>
    </location>
</feature>
<feature type="short sequence motif" description="Nuclear export signal" evidence="3">
    <location>
        <begin position="425"/>
        <end position="440"/>
    </location>
</feature>
<feature type="compositionally biased region" description="Basic and acidic residues" evidence="11">
    <location>
        <begin position="433"/>
        <end position="452"/>
    </location>
</feature>
<feature type="compositionally biased region" description="Low complexity" evidence="11">
    <location>
        <begin position="468"/>
        <end position="479"/>
    </location>
</feature>
<feature type="binding site" evidence="8">
    <location>
        <position position="180"/>
    </location>
    <ligand>
        <name>RNA</name>
        <dbReference type="ChEBI" id="CHEBI:33697"/>
    </ligand>
</feature>
<feature type="binding site" evidence="8">
    <location>
        <position position="195"/>
    </location>
    <ligand>
        <name>RNA</name>
        <dbReference type="ChEBI" id="CHEBI:33697"/>
    </ligand>
</feature>
<feature type="binding site" evidence="8">
    <location>
        <position position="202"/>
    </location>
    <ligand>
        <name>RNA</name>
        <dbReference type="ChEBI" id="CHEBI:33697"/>
    </ligand>
</feature>
<feature type="binding site" evidence="8">
    <location>
        <position position="260"/>
    </location>
    <ligand>
        <name>RNA</name>
        <dbReference type="ChEBI" id="CHEBI:33697"/>
    </ligand>
</feature>
<feature type="binding site" evidence="8">
    <location>
        <position position="351"/>
    </location>
    <ligand>
        <name>RNA</name>
        <dbReference type="ChEBI" id="CHEBI:33697"/>
    </ligand>
</feature>
<feature type="modified residue" description="Phosphothreonine; by host" evidence="10">
    <location>
        <position position="279"/>
    </location>
</feature>
<protein>
    <recommendedName>
        <fullName>Nucleoprotein</fullName>
    </recommendedName>
    <alternativeName>
        <fullName>Nucleocapsid protein</fullName>
        <shortName>NP</shortName>
        <shortName>Protein N</shortName>
    </alternativeName>
</protein>
<accession>B1AAA7</accession>
<organismHost>
    <name type="scientific">Homo sapiens</name>
    <name type="common">Human</name>
    <dbReference type="NCBI Taxonomy" id="9606"/>
</organismHost>
<dbReference type="EMBL" id="EU435017">
    <property type="protein sequence ID" value="ACA09722.1"/>
    <property type="molecule type" value="Viral_cRNA"/>
</dbReference>
<dbReference type="EMBL" id="FJ416067">
    <property type="protein sequence ID" value="ACN54401.1"/>
    <property type="molecule type" value="Viral_cRNA"/>
</dbReference>
<dbReference type="SMR" id="B1AAA7"/>
<dbReference type="Proteomes" id="UP000168151">
    <property type="component" value="Genome"/>
</dbReference>
<dbReference type="Proteomes" id="UP000180978">
    <property type="component" value="Genome"/>
</dbReference>
<dbReference type="GO" id="GO:0019029">
    <property type="term" value="C:helical viral capsid"/>
    <property type="evidence" value="ECO:0007669"/>
    <property type="project" value="UniProtKB-KW"/>
</dbReference>
<dbReference type="GO" id="GO:0030430">
    <property type="term" value="C:host cell cytoplasm"/>
    <property type="evidence" value="ECO:0007669"/>
    <property type="project" value="UniProtKB-SubCell"/>
</dbReference>
<dbReference type="GO" id="GO:0042025">
    <property type="term" value="C:host cell nucleus"/>
    <property type="evidence" value="ECO:0007669"/>
    <property type="project" value="UniProtKB-SubCell"/>
</dbReference>
<dbReference type="GO" id="GO:1990904">
    <property type="term" value="C:ribonucleoprotein complex"/>
    <property type="evidence" value="ECO:0007669"/>
    <property type="project" value="UniProtKB-KW"/>
</dbReference>
<dbReference type="GO" id="GO:0019013">
    <property type="term" value="C:viral nucleocapsid"/>
    <property type="evidence" value="ECO:0007669"/>
    <property type="project" value="UniProtKB-KW"/>
</dbReference>
<dbReference type="GO" id="GO:0003723">
    <property type="term" value="F:RNA binding"/>
    <property type="evidence" value="ECO:0007669"/>
    <property type="project" value="UniProtKB-KW"/>
</dbReference>
<dbReference type="GO" id="GO:0005198">
    <property type="term" value="F:structural molecule activity"/>
    <property type="evidence" value="ECO:0007669"/>
    <property type="project" value="InterPro"/>
</dbReference>
<dbReference type="InterPro" id="IPR002021">
    <property type="entry name" value="Paramyx_ncap"/>
</dbReference>
<dbReference type="Pfam" id="PF00973">
    <property type="entry name" value="Paramyxo_ncap"/>
    <property type="match status" value="1"/>
</dbReference>
<keyword id="KW-0167">Capsid protein</keyword>
<keyword id="KW-1139">Helical capsid protein</keyword>
<keyword id="KW-1035">Host cytoplasm</keyword>
<keyword id="KW-1048">Host nucleus</keyword>
<keyword id="KW-0945">Host-virus interaction</keyword>
<keyword id="KW-0597">Phosphoprotein</keyword>
<keyword id="KW-0687">Ribonucleoprotein</keyword>
<keyword id="KW-0694">RNA-binding</keyword>
<keyword id="KW-0543">Viral nucleoprotein</keyword>
<keyword id="KW-0946">Virion</keyword>
<comment type="function">
    <text evidence="4 5 6 10">Forms the helical nucleocapsid (NC) in a ratio of 1 N per 6 ribonucleotides, protecting the genome from nucleases (By similarity). The nucleocapsid (NC) has a helical structure with either 12.35 or 11.64 N per turn, approximately 20 nm in diameter, with a hollow central cavity approximately 5 nm in diameter (By similarity). The encapsidated genomic RNA serves as template for transcription and replication; encapsidation by N is coupled to RNA synthesis (By similarity). Forms the encapsidation complex with the phosphoprotein protein P (By similarity). Before encapsidation, the newly synthesized free N protein, so-called N0, is chaperoned by P (By similarity). Participates, together with P, in the formation of viral factories (viroplasms), which are large inclusions in the host cytoplasm where replication takes place (By similarity). N is released in the blood following lysis of measles infected cells, it interacts then with human FCGR2B on immune cells, inducing apoptosis and blocking inflammatory immune response (By similarity).</text>
</comment>
<comment type="subunit">
    <text evidence="2 4 5 7 8 9 10">Homomultimer; forms the nucleocapsid (By similarity). Binds to viral genomic RNA (By similarity). N0 interacts (via Ncore) with the phosphoprotein (via N-terminus); this interaction allows P to chaperon N0 to avoid N polymerization and non-specific RNA binding before encapsidation (By similarity). Interacts (via the Ntail) as N-RNA template with the phosphoprotein (via C-terminus XD); this interaction maintains the P/L complex anchored to the nucleocapsid template during the sequential transcription (By similarity). Interacts with the phosphoprotein; this interaction leads to the formation of membraneless organelles that function as viral replication factories (By similarity). Interacts with human FCGR2B protein (By similarity). Interacts with human PPIA/CYPA and PPIB/CYPB (By similarity).</text>
</comment>
<comment type="subcellular location">
    <subcellularLocation>
        <location evidence="3">Virion</location>
    </subcellularLocation>
    <subcellularLocation>
        <location evidence="3">Host cytoplasm</location>
    </subcellularLocation>
    <subcellularLocation>
        <location evidence="3">Host nucleus</location>
    </subcellularLocation>
</comment>
<comment type="domain">
    <text evidence="9">Ncore is globular and carries regions required for N self-assembly and RNA-binding. Ntail is an intrinsically disordered monomeric domain in the C-terminus.</text>
</comment>
<comment type="PTM">
    <text evidence="10">Phosphorylation at Thr-279 is required for the formation of the nucleocapsid.</text>
</comment>
<comment type="similarity">
    <text evidence="12">Belongs to the paramyxoviruses nucleocapsid family.</text>
</comment>